<reference key="1">
    <citation type="journal article" date="2002" name="Science">
        <title>50 million years of genomic stasis in endosymbiotic bacteria.</title>
        <authorList>
            <person name="Tamas I."/>
            <person name="Klasson L."/>
            <person name="Canbaeck B."/>
            <person name="Naeslund A.K."/>
            <person name="Eriksson A.-S."/>
            <person name="Wernegreen J.J."/>
            <person name="Sandstroem J.P."/>
            <person name="Moran N.A."/>
            <person name="Andersson S.G.E."/>
        </authorList>
    </citation>
    <scope>NUCLEOTIDE SEQUENCE [LARGE SCALE GENOMIC DNA]</scope>
    <source>
        <strain>Sg</strain>
    </source>
</reference>
<protein>
    <recommendedName>
        <fullName evidence="2">NADH-quinone oxidoreductase subunit B</fullName>
        <ecNumber evidence="2">7.1.1.-</ecNumber>
    </recommendedName>
    <alternativeName>
        <fullName evidence="2">NADH dehydrogenase I subunit B</fullName>
    </alternativeName>
    <alternativeName>
        <fullName evidence="2">NDH-1 subunit B</fullName>
    </alternativeName>
</protein>
<keyword id="KW-0004">4Fe-4S</keyword>
<keyword id="KW-1003">Cell membrane</keyword>
<keyword id="KW-0408">Iron</keyword>
<keyword id="KW-0411">Iron-sulfur</keyword>
<keyword id="KW-0472">Membrane</keyword>
<keyword id="KW-0479">Metal-binding</keyword>
<keyword id="KW-0520">NAD</keyword>
<keyword id="KW-0874">Quinone</keyword>
<keyword id="KW-1278">Translocase</keyword>
<keyword id="KW-0813">Transport</keyword>
<keyword id="KW-0830">Ubiquinone</keyword>
<gene>
    <name evidence="2" type="primary">nuoB</name>
    <name type="ordered locus">BUsg_148</name>
</gene>
<comment type="function">
    <text evidence="1">NDH-1 shuttles electrons from NADH, via FMN and iron-sulfur (Fe-S) centers, to quinones in the respiratory chain. Couples the redox reaction to proton translocation (for every two electrons transferred, four hydrogen ions are translocated across the cytoplasmic membrane), and thus conserves the redox energy in a proton gradient (By similarity).</text>
</comment>
<comment type="catalytic activity">
    <reaction evidence="2">
        <text>a quinone + NADH + 5 H(+)(in) = a quinol + NAD(+) + 4 H(+)(out)</text>
        <dbReference type="Rhea" id="RHEA:57888"/>
        <dbReference type="ChEBI" id="CHEBI:15378"/>
        <dbReference type="ChEBI" id="CHEBI:24646"/>
        <dbReference type="ChEBI" id="CHEBI:57540"/>
        <dbReference type="ChEBI" id="CHEBI:57945"/>
        <dbReference type="ChEBI" id="CHEBI:132124"/>
    </reaction>
</comment>
<comment type="cofactor">
    <cofactor evidence="2">
        <name>[4Fe-4S] cluster</name>
        <dbReference type="ChEBI" id="CHEBI:49883"/>
    </cofactor>
    <text evidence="2">Binds 1 [4Fe-4S] cluster.</text>
</comment>
<comment type="subunit">
    <text evidence="2">NDH-1 is composed of 13 different subunits. Subunits NuoB, CD, E, F, and G constitute the peripheral sector of the complex.</text>
</comment>
<comment type="subcellular location">
    <subcellularLocation>
        <location evidence="2">Cell membrane</location>
        <topology evidence="2">Peripheral membrane protein</topology>
        <orientation evidence="2">Cytoplasmic side</orientation>
    </subcellularLocation>
</comment>
<comment type="similarity">
    <text evidence="2">Belongs to the complex I 20 kDa subunit family.</text>
</comment>
<feature type="chain" id="PRO_0000118770" description="NADH-quinone oxidoreductase subunit B">
    <location>
        <begin position="1"/>
        <end position="223"/>
    </location>
</feature>
<feature type="region of interest" description="Disordered" evidence="3">
    <location>
        <begin position="1"/>
        <end position="21"/>
    </location>
</feature>
<feature type="binding site" evidence="2">
    <location>
        <position position="66"/>
    </location>
    <ligand>
        <name>[4Fe-4S] cluster</name>
        <dbReference type="ChEBI" id="CHEBI:49883"/>
    </ligand>
</feature>
<feature type="binding site" evidence="2">
    <location>
        <position position="67"/>
    </location>
    <ligand>
        <name>[4Fe-4S] cluster</name>
        <dbReference type="ChEBI" id="CHEBI:49883"/>
    </ligand>
</feature>
<feature type="binding site" evidence="2">
    <location>
        <position position="132"/>
    </location>
    <ligand>
        <name>[4Fe-4S] cluster</name>
        <dbReference type="ChEBI" id="CHEBI:49883"/>
    </ligand>
</feature>
<feature type="binding site" evidence="2">
    <location>
        <position position="161"/>
    </location>
    <ligand>
        <name>[4Fe-4S] cluster</name>
        <dbReference type="ChEBI" id="CHEBI:49883"/>
    </ligand>
</feature>
<proteinExistence type="inferred from homology"/>
<dbReference type="EC" id="7.1.1.-" evidence="2"/>
<dbReference type="EMBL" id="AE013218">
    <property type="protein sequence ID" value="AAM67716.1"/>
    <property type="molecule type" value="Genomic_DNA"/>
</dbReference>
<dbReference type="RefSeq" id="WP_011053683.1">
    <property type="nucleotide sequence ID" value="NC_004061.1"/>
</dbReference>
<dbReference type="SMR" id="Q8K9Y6"/>
<dbReference type="STRING" id="198804.BUsg_148"/>
<dbReference type="GeneID" id="93003618"/>
<dbReference type="KEGG" id="bas:BUsg_148"/>
<dbReference type="eggNOG" id="COG0377">
    <property type="taxonomic scope" value="Bacteria"/>
</dbReference>
<dbReference type="HOGENOM" id="CLU_055737_7_3_6"/>
<dbReference type="Proteomes" id="UP000000416">
    <property type="component" value="Chromosome"/>
</dbReference>
<dbReference type="GO" id="GO:0005886">
    <property type="term" value="C:plasma membrane"/>
    <property type="evidence" value="ECO:0007669"/>
    <property type="project" value="UniProtKB-SubCell"/>
</dbReference>
<dbReference type="GO" id="GO:0045271">
    <property type="term" value="C:respiratory chain complex I"/>
    <property type="evidence" value="ECO:0007669"/>
    <property type="project" value="TreeGrafter"/>
</dbReference>
<dbReference type="GO" id="GO:0051539">
    <property type="term" value="F:4 iron, 4 sulfur cluster binding"/>
    <property type="evidence" value="ECO:0007669"/>
    <property type="project" value="UniProtKB-KW"/>
</dbReference>
<dbReference type="GO" id="GO:0005506">
    <property type="term" value="F:iron ion binding"/>
    <property type="evidence" value="ECO:0007669"/>
    <property type="project" value="UniProtKB-UniRule"/>
</dbReference>
<dbReference type="GO" id="GO:0008137">
    <property type="term" value="F:NADH dehydrogenase (ubiquinone) activity"/>
    <property type="evidence" value="ECO:0007669"/>
    <property type="project" value="InterPro"/>
</dbReference>
<dbReference type="GO" id="GO:0050136">
    <property type="term" value="F:NADH:ubiquinone reductase (non-electrogenic) activity"/>
    <property type="evidence" value="ECO:0007669"/>
    <property type="project" value="UniProtKB-UniRule"/>
</dbReference>
<dbReference type="GO" id="GO:0048038">
    <property type="term" value="F:quinone binding"/>
    <property type="evidence" value="ECO:0007669"/>
    <property type="project" value="UniProtKB-KW"/>
</dbReference>
<dbReference type="GO" id="GO:0009060">
    <property type="term" value="P:aerobic respiration"/>
    <property type="evidence" value="ECO:0007669"/>
    <property type="project" value="TreeGrafter"/>
</dbReference>
<dbReference type="GO" id="GO:0015990">
    <property type="term" value="P:electron transport coupled proton transport"/>
    <property type="evidence" value="ECO:0007669"/>
    <property type="project" value="TreeGrafter"/>
</dbReference>
<dbReference type="FunFam" id="3.40.50.12280:FF:000002">
    <property type="entry name" value="NADH-quinone oxidoreductase subunit B"/>
    <property type="match status" value="1"/>
</dbReference>
<dbReference type="Gene3D" id="3.40.50.12280">
    <property type="match status" value="1"/>
</dbReference>
<dbReference type="HAMAP" id="MF_01356">
    <property type="entry name" value="NDH1_NuoB"/>
    <property type="match status" value="1"/>
</dbReference>
<dbReference type="InterPro" id="IPR006137">
    <property type="entry name" value="NADH_UbQ_OxRdtase-like_20kDa"/>
</dbReference>
<dbReference type="InterPro" id="IPR006138">
    <property type="entry name" value="NADH_UQ_OxRdtase_20Kd_su"/>
</dbReference>
<dbReference type="NCBIfam" id="TIGR01957">
    <property type="entry name" value="nuoB_fam"/>
    <property type="match status" value="1"/>
</dbReference>
<dbReference type="NCBIfam" id="NF005012">
    <property type="entry name" value="PRK06411.1"/>
    <property type="match status" value="1"/>
</dbReference>
<dbReference type="PANTHER" id="PTHR11995">
    <property type="entry name" value="NADH DEHYDROGENASE"/>
    <property type="match status" value="1"/>
</dbReference>
<dbReference type="PANTHER" id="PTHR11995:SF14">
    <property type="entry name" value="NADH DEHYDROGENASE [UBIQUINONE] IRON-SULFUR PROTEIN 7, MITOCHONDRIAL"/>
    <property type="match status" value="1"/>
</dbReference>
<dbReference type="Pfam" id="PF01058">
    <property type="entry name" value="Oxidored_q6"/>
    <property type="match status" value="1"/>
</dbReference>
<dbReference type="SUPFAM" id="SSF56770">
    <property type="entry name" value="HydA/Nqo6-like"/>
    <property type="match status" value="1"/>
</dbReference>
<dbReference type="PROSITE" id="PS01150">
    <property type="entry name" value="COMPLEX1_20K"/>
    <property type="match status" value="1"/>
</dbReference>
<evidence type="ECO:0000250" key="1"/>
<evidence type="ECO:0000255" key="2">
    <source>
        <dbReference type="HAMAP-Rule" id="MF_01356"/>
    </source>
</evidence>
<evidence type="ECO:0000256" key="3">
    <source>
        <dbReference type="SAM" id="MobiDB-lite"/>
    </source>
</evidence>
<sequence length="223" mass="25497">MNYTLTRAERKSQRHYPNETTQSTIDPIEGYLKKNILMGKVTKLLHKIVNWGRKNSLWPYNFGLSCCYVEMVTAFTSVHDVARFGSEVLRASPRQADVMVIAGTPFIKMAPVIQRLYDQMLEPKWVISMGACANSGGMYDIYSVVQGVDKFLPVDIYIPGCPPRPEAYIHALTLLQKTINEERRPLSWVVGEQGIYRKKMLSEKIQNRKKRISVVNLPTSEKI</sequence>
<name>NUOB_BUCAP</name>
<organism>
    <name type="scientific">Buchnera aphidicola subsp. Schizaphis graminum (strain Sg)</name>
    <dbReference type="NCBI Taxonomy" id="198804"/>
    <lineage>
        <taxon>Bacteria</taxon>
        <taxon>Pseudomonadati</taxon>
        <taxon>Pseudomonadota</taxon>
        <taxon>Gammaproteobacteria</taxon>
        <taxon>Enterobacterales</taxon>
        <taxon>Erwiniaceae</taxon>
        <taxon>Buchnera</taxon>
    </lineage>
</organism>
<accession>Q8K9Y6</accession>